<gene>
    <name evidence="1" type="primary">coaA</name>
    <name type="ordered locus">LACR_1533</name>
</gene>
<protein>
    <recommendedName>
        <fullName evidence="1">Pantothenate kinase</fullName>
        <ecNumber evidence="1">2.7.1.33</ecNumber>
    </recommendedName>
    <alternativeName>
        <fullName evidence="1">Pantothenic acid kinase</fullName>
    </alternativeName>
</protein>
<feature type="chain" id="PRO_1000043221" description="Pantothenate kinase">
    <location>
        <begin position="1"/>
        <end position="306"/>
    </location>
</feature>
<feature type="binding site" evidence="1">
    <location>
        <begin position="90"/>
        <end position="97"/>
    </location>
    <ligand>
        <name>ATP</name>
        <dbReference type="ChEBI" id="CHEBI:30616"/>
    </ligand>
</feature>
<reference key="1">
    <citation type="journal article" date="2006" name="Proc. Natl. Acad. Sci. U.S.A.">
        <title>Comparative genomics of the lactic acid bacteria.</title>
        <authorList>
            <person name="Makarova K.S."/>
            <person name="Slesarev A."/>
            <person name="Wolf Y.I."/>
            <person name="Sorokin A."/>
            <person name="Mirkin B."/>
            <person name="Koonin E.V."/>
            <person name="Pavlov A."/>
            <person name="Pavlova N."/>
            <person name="Karamychev V."/>
            <person name="Polouchine N."/>
            <person name="Shakhova V."/>
            <person name="Grigoriev I."/>
            <person name="Lou Y."/>
            <person name="Rohksar D."/>
            <person name="Lucas S."/>
            <person name="Huang K."/>
            <person name="Goodstein D.M."/>
            <person name="Hawkins T."/>
            <person name="Plengvidhya V."/>
            <person name="Welker D."/>
            <person name="Hughes J."/>
            <person name="Goh Y."/>
            <person name="Benson A."/>
            <person name="Baldwin K."/>
            <person name="Lee J.-H."/>
            <person name="Diaz-Muniz I."/>
            <person name="Dosti B."/>
            <person name="Smeianov V."/>
            <person name="Wechter W."/>
            <person name="Barabote R."/>
            <person name="Lorca G."/>
            <person name="Altermann E."/>
            <person name="Barrangou R."/>
            <person name="Ganesan B."/>
            <person name="Xie Y."/>
            <person name="Rawsthorne H."/>
            <person name="Tamir D."/>
            <person name="Parker C."/>
            <person name="Breidt F."/>
            <person name="Broadbent J.R."/>
            <person name="Hutkins R."/>
            <person name="O'Sullivan D."/>
            <person name="Steele J."/>
            <person name="Unlu G."/>
            <person name="Saier M.H. Jr."/>
            <person name="Klaenhammer T."/>
            <person name="Richardson P."/>
            <person name="Kozyavkin S."/>
            <person name="Weimer B.C."/>
            <person name="Mills D.A."/>
        </authorList>
    </citation>
    <scope>NUCLEOTIDE SEQUENCE [LARGE SCALE GENOMIC DNA]</scope>
    <source>
        <strain>SK11</strain>
    </source>
</reference>
<evidence type="ECO:0000255" key="1">
    <source>
        <dbReference type="HAMAP-Rule" id="MF_00215"/>
    </source>
</evidence>
<sequence>MNEFINFDEISRETWQNLYNTSIAPLTYDELESIRSLNDEISLQDVEDVYLPLIHLLRLYKKNLEDMSYSKGLFLQKIVKTPPLIIGISGSVAVGKSTTARLLQLLLSRAFPKLTVDLVTTDGFLYTTDDLKNMGILDRKGFPESYDMEKLTSFLYHVKNGERFEVPIYSHETYDILPNQSQIIDSPDILIVEGINVLQNPQNQLLYISDFYDFSIYVDADEKLIEKWYLERFDSLLKLAKYDQTNFYHQFTKMPEDKVLNLARETWARVNRVNLREYIEPTRNRAEIILHKSENHHIDKIYLKKF</sequence>
<proteinExistence type="inferred from homology"/>
<organism>
    <name type="scientific">Lactococcus lactis subsp. cremoris (strain SK11)</name>
    <dbReference type="NCBI Taxonomy" id="272622"/>
    <lineage>
        <taxon>Bacteria</taxon>
        <taxon>Bacillati</taxon>
        <taxon>Bacillota</taxon>
        <taxon>Bacilli</taxon>
        <taxon>Lactobacillales</taxon>
        <taxon>Streptococcaceae</taxon>
        <taxon>Lactococcus</taxon>
        <taxon>Lactococcus cremoris subsp. cremoris</taxon>
    </lineage>
</organism>
<dbReference type="EC" id="2.7.1.33" evidence="1"/>
<dbReference type="EMBL" id="CP000425">
    <property type="protein sequence ID" value="ABJ73040.1"/>
    <property type="molecule type" value="Genomic_DNA"/>
</dbReference>
<dbReference type="RefSeq" id="WP_011676400.1">
    <property type="nucleotide sequence ID" value="NC_008527.1"/>
</dbReference>
<dbReference type="SMR" id="Q02YD2"/>
<dbReference type="KEGG" id="llc:LACR_1533"/>
<dbReference type="HOGENOM" id="CLU_053818_1_1_9"/>
<dbReference type="UniPathway" id="UPA00241">
    <property type="reaction ID" value="UER00352"/>
</dbReference>
<dbReference type="Proteomes" id="UP000000240">
    <property type="component" value="Chromosome"/>
</dbReference>
<dbReference type="GO" id="GO:0005737">
    <property type="term" value="C:cytoplasm"/>
    <property type="evidence" value="ECO:0007669"/>
    <property type="project" value="UniProtKB-SubCell"/>
</dbReference>
<dbReference type="GO" id="GO:0005524">
    <property type="term" value="F:ATP binding"/>
    <property type="evidence" value="ECO:0007669"/>
    <property type="project" value="UniProtKB-UniRule"/>
</dbReference>
<dbReference type="GO" id="GO:0004594">
    <property type="term" value="F:pantothenate kinase activity"/>
    <property type="evidence" value="ECO:0007669"/>
    <property type="project" value="UniProtKB-UniRule"/>
</dbReference>
<dbReference type="GO" id="GO:0015937">
    <property type="term" value="P:coenzyme A biosynthetic process"/>
    <property type="evidence" value="ECO:0007669"/>
    <property type="project" value="UniProtKB-UniRule"/>
</dbReference>
<dbReference type="CDD" id="cd02025">
    <property type="entry name" value="PanK"/>
    <property type="match status" value="1"/>
</dbReference>
<dbReference type="Gene3D" id="3.40.50.300">
    <property type="entry name" value="P-loop containing nucleotide triphosphate hydrolases"/>
    <property type="match status" value="1"/>
</dbReference>
<dbReference type="HAMAP" id="MF_00215">
    <property type="entry name" value="Pantothen_kinase_1"/>
    <property type="match status" value="1"/>
</dbReference>
<dbReference type="InterPro" id="IPR027417">
    <property type="entry name" value="P-loop_NTPase"/>
</dbReference>
<dbReference type="InterPro" id="IPR004566">
    <property type="entry name" value="PanK"/>
</dbReference>
<dbReference type="InterPro" id="IPR006083">
    <property type="entry name" value="PRK/URK"/>
</dbReference>
<dbReference type="NCBIfam" id="TIGR00554">
    <property type="entry name" value="panK_bact"/>
    <property type="match status" value="1"/>
</dbReference>
<dbReference type="PANTHER" id="PTHR10285">
    <property type="entry name" value="URIDINE KINASE"/>
    <property type="match status" value="1"/>
</dbReference>
<dbReference type="Pfam" id="PF00485">
    <property type="entry name" value="PRK"/>
    <property type="match status" value="1"/>
</dbReference>
<dbReference type="PIRSF" id="PIRSF000545">
    <property type="entry name" value="Pantothenate_kin"/>
    <property type="match status" value="1"/>
</dbReference>
<dbReference type="SUPFAM" id="SSF52540">
    <property type="entry name" value="P-loop containing nucleoside triphosphate hydrolases"/>
    <property type="match status" value="1"/>
</dbReference>
<accession>Q02YD2</accession>
<keyword id="KW-0067">ATP-binding</keyword>
<keyword id="KW-0173">Coenzyme A biosynthesis</keyword>
<keyword id="KW-0963">Cytoplasm</keyword>
<keyword id="KW-0418">Kinase</keyword>
<keyword id="KW-0547">Nucleotide-binding</keyword>
<keyword id="KW-0808">Transferase</keyword>
<name>COAA_LACLS</name>
<comment type="catalytic activity">
    <reaction evidence="1">
        <text>(R)-pantothenate + ATP = (R)-4'-phosphopantothenate + ADP + H(+)</text>
        <dbReference type="Rhea" id="RHEA:16373"/>
        <dbReference type="ChEBI" id="CHEBI:10986"/>
        <dbReference type="ChEBI" id="CHEBI:15378"/>
        <dbReference type="ChEBI" id="CHEBI:29032"/>
        <dbReference type="ChEBI" id="CHEBI:30616"/>
        <dbReference type="ChEBI" id="CHEBI:456216"/>
        <dbReference type="EC" id="2.7.1.33"/>
    </reaction>
</comment>
<comment type="pathway">
    <text evidence="1">Cofactor biosynthesis; coenzyme A biosynthesis; CoA from (R)-pantothenate: step 1/5.</text>
</comment>
<comment type="subcellular location">
    <subcellularLocation>
        <location evidence="1">Cytoplasm</location>
    </subcellularLocation>
</comment>
<comment type="similarity">
    <text evidence="1">Belongs to the prokaryotic pantothenate kinase family.</text>
</comment>